<organism>
    <name type="scientific">Arabidopsis thaliana</name>
    <name type="common">Mouse-ear cress</name>
    <dbReference type="NCBI Taxonomy" id="3702"/>
    <lineage>
        <taxon>Eukaryota</taxon>
        <taxon>Viridiplantae</taxon>
        <taxon>Streptophyta</taxon>
        <taxon>Embryophyta</taxon>
        <taxon>Tracheophyta</taxon>
        <taxon>Spermatophyta</taxon>
        <taxon>Magnoliopsida</taxon>
        <taxon>eudicotyledons</taxon>
        <taxon>Gunneridae</taxon>
        <taxon>Pentapetalae</taxon>
        <taxon>rosids</taxon>
        <taxon>malvids</taxon>
        <taxon>Brassicales</taxon>
        <taxon>Brassicaceae</taxon>
        <taxon>Camelineae</taxon>
        <taxon>Arabidopsis</taxon>
    </lineage>
</organism>
<comment type="catalytic activity">
    <reaction>
        <text>3-hydroxy-2-methylpropanoate + NAD(+) = 2-methyl-3-oxopropanoate + NADH + H(+)</text>
        <dbReference type="Rhea" id="RHEA:17681"/>
        <dbReference type="ChEBI" id="CHEBI:11805"/>
        <dbReference type="ChEBI" id="CHEBI:15378"/>
        <dbReference type="ChEBI" id="CHEBI:57540"/>
        <dbReference type="ChEBI" id="CHEBI:57700"/>
        <dbReference type="ChEBI" id="CHEBI:57945"/>
        <dbReference type="EC" id="1.1.1.31"/>
    </reaction>
</comment>
<comment type="pathway">
    <text>Amino-acid degradation; L-valine degradation.</text>
</comment>
<comment type="interaction">
    <interactant intactId="EBI-25528816">
        <id>Q9SUC0</id>
    </interactant>
    <interactant intactId="EBI-2363213">
        <id>Q8H1R0</id>
        <label>PYL10</label>
    </interactant>
    <organismsDiffer>false</organismsDiffer>
    <experiments>3</experiments>
</comment>
<comment type="subcellular location">
    <subcellularLocation>
        <location evidence="1">Mitochondrion</location>
    </subcellularLocation>
</comment>
<comment type="similarity">
    <text evidence="2">Belongs to the HIBADH-related family. 3-hydroxyisobutyrate dehydrogenase subfamily.</text>
</comment>
<comment type="sequence caution" evidence="2">
    <conflict type="erroneous gene model prediction">
        <sequence resource="EMBL-CDS" id="CAB45888"/>
    </conflict>
</comment>
<comment type="sequence caution" evidence="2">
    <conflict type="erroneous gene model prediction">
        <sequence resource="EMBL-CDS" id="CAB79093"/>
    </conflict>
</comment>
<accession>Q9SUC0</accession>
<accession>Q1ECP8</accession>
<accession>Q8LC25</accession>
<keyword id="KW-0101">Branched-chain amino acid catabolism</keyword>
<keyword id="KW-0496">Mitochondrion</keyword>
<keyword id="KW-0520">NAD</keyword>
<keyword id="KW-0560">Oxidoreductase</keyword>
<keyword id="KW-1185">Reference proteome</keyword>
<keyword id="KW-0809">Transit peptide</keyword>
<gene>
    <name type="ordered locus">At4g20930</name>
    <name type="ORF">T13K14.90</name>
</gene>
<proteinExistence type="evidence at protein level"/>
<evidence type="ECO:0000250" key="1"/>
<evidence type="ECO:0000305" key="2"/>
<feature type="transit peptide" description="Mitochondrion" evidence="1">
    <location>
        <begin position="1"/>
        <end position="34"/>
    </location>
</feature>
<feature type="chain" id="PRO_0000007162" description="Probable 3-hydroxyisobutyrate dehydrogenase, mitochondrial">
    <location>
        <begin position="35"/>
        <end position="347"/>
    </location>
</feature>
<feature type="active site" evidence="1">
    <location>
        <position position="219"/>
    </location>
</feature>
<feature type="binding site" evidence="1">
    <location>
        <begin position="38"/>
        <end position="67"/>
    </location>
    <ligand>
        <name>NAD(+)</name>
        <dbReference type="ChEBI" id="CHEBI:57540"/>
    </ligand>
</feature>
<feature type="binding site" evidence="1">
    <location>
        <begin position="101"/>
        <end position="102"/>
    </location>
    <ligand>
        <name>NAD(+)</name>
        <dbReference type="ChEBI" id="CHEBI:57540"/>
    </ligand>
</feature>
<feature type="binding site" evidence="1">
    <location>
        <position position="134"/>
    </location>
    <ligand>
        <name>NAD(+)</name>
        <dbReference type="ChEBI" id="CHEBI:57540"/>
    </ligand>
</feature>
<feature type="binding site" evidence="1">
    <location>
        <position position="294"/>
    </location>
    <ligand>
        <name>NAD(+)</name>
        <dbReference type="ChEBI" id="CHEBI:57540"/>
    </ligand>
</feature>
<feature type="sequence conflict" description="In Ref. 5; AAM63893." evidence="2" ref="5">
    <original>S</original>
    <variation>F</variation>
    <location>
        <position position="21"/>
    </location>
</feature>
<reference key="1">
    <citation type="journal article" date="1999" name="Nature">
        <title>Sequence and analysis of chromosome 4 of the plant Arabidopsis thaliana.</title>
        <authorList>
            <person name="Mayer K.F.X."/>
            <person name="Schueller C."/>
            <person name="Wambutt R."/>
            <person name="Murphy G."/>
            <person name="Volckaert G."/>
            <person name="Pohl T."/>
            <person name="Duesterhoeft A."/>
            <person name="Stiekema W."/>
            <person name="Entian K.-D."/>
            <person name="Terryn N."/>
            <person name="Harris B."/>
            <person name="Ansorge W."/>
            <person name="Brandt P."/>
            <person name="Grivell L.A."/>
            <person name="Rieger M."/>
            <person name="Weichselgartner M."/>
            <person name="de Simone V."/>
            <person name="Obermaier B."/>
            <person name="Mache R."/>
            <person name="Mueller M."/>
            <person name="Kreis M."/>
            <person name="Delseny M."/>
            <person name="Puigdomenech P."/>
            <person name="Watson M."/>
            <person name="Schmidtheini T."/>
            <person name="Reichert B."/>
            <person name="Portetelle D."/>
            <person name="Perez-Alonso M."/>
            <person name="Boutry M."/>
            <person name="Bancroft I."/>
            <person name="Vos P."/>
            <person name="Hoheisel J."/>
            <person name="Zimmermann W."/>
            <person name="Wedler H."/>
            <person name="Ridley P."/>
            <person name="Langham S.-A."/>
            <person name="McCullagh B."/>
            <person name="Bilham L."/>
            <person name="Robben J."/>
            <person name="van der Schueren J."/>
            <person name="Grymonprez B."/>
            <person name="Chuang Y.-J."/>
            <person name="Vandenbussche F."/>
            <person name="Braeken M."/>
            <person name="Weltjens I."/>
            <person name="Voet M."/>
            <person name="Bastiaens I."/>
            <person name="Aert R."/>
            <person name="Defoor E."/>
            <person name="Weitzenegger T."/>
            <person name="Bothe G."/>
            <person name="Ramsperger U."/>
            <person name="Hilbert H."/>
            <person name="Braun M."/>
            <person name="Holzer E."/>
            <person name="Brandt A."/>
            <person name="Peters S."/>
            <person name="van Staveren M."/>
            <person name="Dirkse W."/>
            <person name="Mooijman P."/>
            <person name="Klein Lankhorst R."/>
            <person name="Rose M."/>
            <person name="Hauf J."/>
            <person name="Koetter P."/>
            <person name="Berneiser S."/>
            <person name="Hempel S."/>
            <person name="Feldpausch M."/>
            <person name="Lamberth S."/>
            <person name="Van den Daele H."/>
            <person name="De Keyser A."/>
            <person name="Buysshaert C."/>
            <person name="Gielen J."/>
            <person name="Villarroel R."/>
            <person name="De Clercq R."/>
            <person name="van Montagu M."/>
            <person name="Rogers J."/>
            <person name="Cronin A."/>
            <person name="Quail M.A."/>
            <person name="Bray-Allen S."/>
            <person name="Clark L."/>
            <person name="Doggett J."/>
            <person name="Hall S."/>
            <person name="Kay M."/>
            <person name="Lennard N."/>
            <person name="McLay K."/>
            <person name="Mayes R."/>
            <person name="Pettett A."/>
            <person name="Rajandream M.A."/>
            <person name="Lyne M."/>
            <person name="Benes V."/>
            <person name="Rechmann S."/>
            <person name="Borkova D."/>
            <person name="Bloecker H."/>
            <person name="Scharfe M."/>
            <person name="Grimm M."/>
            <person name="Loehnert T.-H."/>
            <person name="Dose S."/>
            <person name="de Haan M."/>
            <person name="Maarse A.C."/>
            <person name="Schaefer M."/>
            <person name="Mueller-Auer S."/>
            <person name="Gabel C."/>
            <person name="Fuchs M."/>
            <person name="Fartmann B."/>
            <person name="Granderath K."/>
            <person name="Dauner D."/>
            <person name="Herzl A."/>
            <person name="Neumann S."/>
            <person name="Argiriou A."/>
            <person name="Vitale D."/>
            <person name="Liguori R."/>
            <person name="Piravandi E."/>
            <person name="Massenet O."/>
            <person name="Quigley F."/>
            <person name="Clabauld G."/>
            <person name="Muendlein A."/>
            <person name="Felber R."/>
            <person name="Schnabl S."/>
            <person name="Hiller R."/>
            <person name="Schmidt W."/>
            <person name="Lecharny A."/>
            <person name="Aubourg S."/>
            <person name="Chefdor F."/>
            <person name="Cooke R."/>
            <person name="Berger C."/>
            <person name="Monfort A."/>
            <person name="Casacuberta E."/>
            <person name="Gibbons T."/>
            <person name="Weber N."/>
            <person name="Vandenbol M."/>
            <person name="Bargues M."/>
            <person name="Terol J."/>
            <person name="Torres A."/>
            <person name="Perez-Perez A."/>
            <person name="Purnelle B."/>
            <person name="Bent E."/>
            <person name="Johnson S."/>
            <person name="Tacon D."/>
            <person name="Jesse T."/>
            <person name="Heijnen L."/>
            <person name="Schwarz S."/>
            <person name="Scholler P."/>
            <person name="Heber S."/>
            <person name="Francs P."/>
            <person name="Bielke C."/>
            <person name="Frishman D."/>
            <person name="Haase D."/>
            <person name="Lemcke K."/>
            <person name="Mewes H.-W."/>
            <person name="Stocker S."/>
            <person name="Zaccaria P."/>
            <person name="Bevan M."/>
            <person name="Wilson R.K."/>
            <person name="de la Bastide M."/>
            <person name="Habermann K."/>
            <person name="Parnell L."/>
            <person name="Dedhia N."/>
            <person name="Gnoj L."/>
            <person name="Schutz K."/>
            <person name="Huang E."/>
            <person name="Spiegel L."/>
            <person name="Sekhon M."/>
            <person name="Murray J."/>
            <person name="Sheet P."/>
            <person name="Cordes M."/>
            <person name="Abu-Threideh J."/>
            <person name="Stoneking T."/>
            <person name="Kalicki J."/>
            <person name="Graves T."/>
            <person name="Harmon G."/>
            <person name="Edwards J."/>
            <person name="Latreille P."/>
            <person name="Courtney L."/>
            <person name="Cloud J."/>
            <person name="Abbott A."/>
            <person name="Scott K."/>
            <person name="Johnson D."/>
            <person name="Minx P."/>
            <person name="Bentley D."/>
            <person name="Fulton B."/>
            <person name="Miller N."/>
            <person name="Greco T."/>
            <person name="Kemp K."/>
            <person name="Kramer J."/>
            <person name="Fulton L."/>
            <person name="Mardis E."/>
            <person name="Dante M."/>
            <person name="Pepin K."/>
            <person name="Hillier L.W."/>
            <person name="Nelson J."/>
            <person name="Spieth J."/>
            <person name="Ryan E."/>
            <person name="Andrews S."/>
            <person name="Geisel C."/>
            <person name="Layman D."/>
            <person name="Du H."/>
            <person name="Ali J."/>
            <person name="Berghoff A."/>
            <person name="Jones K."/>
            <person name="Drone K."/>
            <person name="Cotton M."/>
            <person name="Joshu C."/>
            <person name="Antonoiu B."/>
            <person name="Zidanic M."/>
            <person name="Strong C."/>
            <person name="Sun H."/>
            <person name="Lamar B."/>
            <person name="Yordan C."/>
            <person name="Ma P."/>
            <person name="Zhong J."/>
            <person name="Preston R."/>
            <person name="Vil D."/>
            <person name="Shekher M."/>
            <person name="Matero A."/>
            <person name="Shah R."/>
            <person name="Swaby I.K."/>
            <person name="O'Shaughnessy A."/>
            <person name="Rodriguez M."/>
            <person name="Hoffman J."/>
            <person name="Till S."/>
            <person name="Granat S."/>
            <person name="Shohdy N."/>
            <person name="Hasegawa A."/>
            <person name="Hameed A."/>
            <person name="Lodhi M."/>
            <person name="Johnson A."/>
            <person name="Chen E."/>
            <person name="Marra M.A."/>
            <person name="Martienssen R."/>
            <person name="McCombie W.R."/>
        </authorList>
    </citation>
    <scope>NUCLEOTIDE SEQUENCE [LARGE SCALE GENOMIC DNA]</scope>
    <source>
        <strain>cv. Columbia</strain>
    </source>
</reference>
<reference key="2">
    <citation type="journal article" date="2017" name="Plant J.">
        <title>Araport11: a complete reannotation of the Arabidopsis thaliana reference genome.</title>
        <authorList>
            <person name="Cheng C.Y."/>
            <person name="Krishnakumar V."/>
            <person name="Chan A.P."/>
            <person name="Thibaud-Nissen F."/>
            <person name="Schobel S."/>
            <person name="Town C.D."/>
        </authorList>
    </citation>
    <scope>GENOME REANNOTATION</scope>
    <source>
        <strain>cv. Columbia</strain>
    </source>
</reference>
<reference key="3">
    <citation type="submission" date="2006-06" db="EMBL/GenBank/DDBJ databases">
        <title>Arabidopsis ORF clones.</title>
        <authorList>
            <person name="Shinn P."/>
            <person name="Chen H."/>
            <person name="Kim C.J."/>
            <person name="Quinitio C."/>
            <person name="Ecker J.R."/>
        </authorList>
    </citation>
    <scope>NUCLEOTIDE SEQUENCE [LARGE SCALE MRNA]</scope>
    <source>
        <strain>cv. Columbia</strain>
    </source>
</reference>
<reference key="4">
    <citation type="submission" date="2006-07" db="EMBL/GenBank/DDBJ databases">
        <title>Large-scale analysis of RIKEN Arabidopsis full-length (RAFL) cDNAs.</title>
        <authorList>
            <person name="Totoki Y."/>
            <person name="Seki M."/>
            <person name="Ishida J."/>
            <person name="Nakajima M."/>
            <person name="Enju A."/>
            <person name="Kamiya A."/>
            <person name="Narusaka M."/>
            <person name="Shin-i T."/>
            <person name="Nakagawa M."/>
            <person name="Sakamoto N."/>
            <person name="Oishi K."/>
            <person name="Kohara Y."/>
            <person name="Kobayashi M."/>
            <person name="Toyoda A."/>
            <person name="Sakaki Y."/>
            <person name="Sakurai T."/>
            <person name="Iida K."/>
            <person name="Akiyama K."/>
            <person name="Satou M."/>
            <person name="Toyoda T."/>
            <person name="Konagaya A."/>
            <person name="Carninci P."/>
            <person name="Kawai J."/>
            <person name="Hayashizaki Y."/>
            <person name="Shinozaki K."/>
        </authorList>
    </citation>
    <scope>NUCLEOTIDE SEQUENCE [LARGE SCALE MRNA]</scope>
    <source>
        <strain>cv. Columbia</strain>
    </source>
</reference>
<reference key="5">
    <citation type="submission" date="2002-03" db="EMBL/GenBank/DDBJ databases">
        <title>Full-length cDNA from Arabidopsis thaliana.</title>
        <authorList>
            <person name="Brover V.V."/>
            <person name="Troukhan M.E."/>
            <person name="Alexandrov N.A."/>
            <person name="Lu Y.-P."/>
            <person name="Flavell R.B."/>
            <person name="Feldmann K.A."/>
        </authorList>
    </citation>
    <scope>NUCLEOTIDE SEQUENCE [LARGE SCALE MRNA]</scope>
</reference>
<sequence>MAIRRAQTLLCLSKFKTNFVSGSLHRFSSSSQNSNQFQNVGFIGLGNMGFRMVNNLIRAGYKVTVHDINRDVMKMFTEMGVSSRETPYEVAQDSEVVITMLPSSSHVMDVYTGTNGLLLGENDIRPALFIDSSTIDPQTTRKISLAVSNCNLKEKRDNWEKPVMLDAPVSGGVLAAEAGTLTFMVGGPEDAYLAARPILQSMGRTSIYCGGSGNGSAAKICNNLAMAVSMLGTSEALALGQSLGISASTLTEVLNTSSGRCWSSDAYNPVPGVMKGVPSSRDYNGGFASKLMAKDLNLAAASAEEVGHKSPLISKAQEIYKKMCEEGHETKDFSCVFRHFYNGKDEV</sequence>
<name>3HIDH_ARATH</name>
<dbReference type="EC" id="1.1.1.31"/>
<dbReference type="EMBL" id="AL080282">
    <property type="protein sequence ID" value="CAB45888.1"/>
    <property type="status" value="ALT_SEQ"/>
    <property type="molecule type" value="Genomic_DNA"/>
</dbReference>
<dbReference type="EMBL" id="AL161554">
    <property type="protein sequence ID" value="CAB79093.1"/>
    <property type="status" value="ALT_SEQ"/>
    <property type="molecule type" value="Genomic_DNA"/>
</dbReference>
<dbReference type="EMBL" id="CP002687">
    <property type="protein sequence ID" value="AEE84377.1"/>
    <property type="molecule type" value="Genomic_DNA"/>
</dbReference>
<dbReference type="EMBL" id="BT025657">
    <property type="protein sequence ID" value="ABF74718.1"/>
    <property type="molecule type" value="mRNA"/>
</dbReference>
<dbReference type="EMBL" id="AK228571">
    <property type="protein sequence ID" value="BAF00489.1"/>
    <property type="molecule type" value="mRNA"/>
</dbReference>
<dbReference type="EMBL" id="AY086845">
    <property type="protein sequence ID" value="AAM63893.1"/>
    <property type="molecule type" value="mRNA"/>
</dbReference>
<dbReference type="RefSeq" id="NP_567617.1">
    <property type="nucleotide sequence ID" value="NM_118211.5"/>
</dbReference>
<dbReference type="SMR" id="Q9SUC0"/>
<dbReference type="BioGRID" id="13132">
    <property type="interactions" value="2"/>
</dbReference>
<dbReference type="FunCoup" id="Q9SUC0">
    <property type="interactions" value="2564"/>
</dbReference>
<dbReference type="IntAct" id="Q9SUC0">
    <property type="interactions" value="1"/>
</dbReference>
<dbReference type="STRING" id="3702.Q9SUC0"/>
<dbReference type="iPTMnet" id="Q9SUC0"/>
<dbReference type="PaxDb" id="3702-AT4G20930.1"/>
<dbReference type="ProteomicsDB" id="244505"/>
<dbReference type="EnsemblPlants" id="AT4G20930.1">
    <property type="protein sequence ID" value="AT4G20930.1"/>
    <property type="gene ID" value="AT4G20930"/>
</dbReference>
<dbReference type="GeneID" id="827841"/>
<dbReference type="Gramene" id="AT4G20930.1">
    <property type="protein sequence ID" value="AT4G20930.1"/>
    <property type="gene ID" value="AT4G20930"/>
</dbReference>
<dbReference type="KEGG" id="ath:AT4G20930"/>
<dbReference type="Araport" id="AT4G20930"/>
<dbReference type="TAIR" id="AT4G20930">
    <property type="gene designation" value="HDH1"/>
</dbReference>
<dbReference type="eggNOG" id="KOG0409">
    <property type="taxonomic scope" value="Eukaryota"/>
</dbReference>
<dbReference type="HOGENOM" id="CLU_035117_6_0_1"/>
<dbReference type="InParanoid" id="Q9SUC0"/>
<dbReference type="OMA" id="MGKKVWH"/>
<dbReference type="PhylomeDB" id="Q9SUC0"/>
<dbReference type="BioCyc" id="ARA:AT4G20930-MONOMER"/>
<dbReference type="UniPathway" id="UPA00362"/>
<dbReference type="PRO" id="PR:Q9SUC0"/>
<dbReference type="Proteomes" id="UP000006548">
    <property type="component" value="Chromosome 4"/>
</dbReference>
<dbReference type="ExpressionAtlas" id="Q9SUC0">
    <property type="expression patterns" value="baseline and differential"/>
</dbReference>
<dbReference type="GO" id="GO:0005739">
    <property type="term" value="C:mitochondrion"/>
    <property type="evidence" value="ECO:0007669"/>
    <property type="project" value="UniProtKB-SubCell"/>
</dbReference>
<dbReference type="GO" id="GO:0008442">
    <property type="term" value="F:3-hydroxyisobutyrate dehydrogenase activity"/>
    <property type="evidence" value="ECO:0000314"/>
    <property type="project" value="TAIR"/>
</dbReference>
<dbReference type="GO" id="GO:0051287">
    <property type="term" value="F:NAD binding"/>
    <property type="evidence" value="ECO:0007669"/>
    <property type="project" value="InterPro"/>
</dbReference>
<dbReference type="GO" id="GO:0050661">
    <property type="term" value="F:NADP binding"/>
    <property type="evidence" value="ECO:0007669"/>
    <property type="project" value="InterPro"/>
</dbReference>
<dbReference type="GO" id="GO:0006551">
    <property type="term" value="P:L-leucine metabolic process"/>
    <property type="evidence" value="ECO:0000315"/>
    <property type="project" value="TAIR"/>
</dbReference>
<dbReference type="GO" id="GO:0006574">
    <property type="term" value="P:valine catabolic process"/>
    <property type="evidence" value="ECO:0007669"/>
    <property type="project" value="UniProtKB-UniPathway"/>
</dbReference>
<dbReference type="GO" id="GO:0006573">
    <property type="term" value="P:valine metabolic process"/>
    <property type="evidence" value="ECO:0000315"/>
    <property type="project" value="TAIR"/>
</dbReference>
<dbReference type="FunFam" id="1.10.1040.10:FF:000006">
    <property type="entry name" value="3-hydroxyisobutyrate dehydrogenase"/>
    <property type="match status" value="1"/>
</dbReference>
<dbReference type="FunFam" id="3.40.50.720:FF:000119">
    <property type="entry name" value="3-hydroxyisobutyrate dehydrogenase"/>
    <property type="match status" value="1"/>
</dbReference>
<dbReference type="Gene3D" id="1.10.1040.10">
    <property type="entry name" value="N-(1-d-carboxylethyl)-l-norvaline Dehydrogenase, domain 2"/>
    <property type="match status" value="1"/>
</dbReference>
<dbReference type="Gene3D" id="3.40.50.720">
    <property type="entry name" value="NAD(P)-binding Rossmann-like Domain"/>
    <property type="match status" value="1"/>
</dbReference>
<dbReference type="InterPro" id="IPR002204">
    <property type="entry name" value="3-OH-isobutyrate_DH-rel_CS"/>
</dbReference>
<dbReference type="InterPro" id="IPR008927">
    <property type="entry name" value="6-PGluconate_DH-like_C_sf"/>
</dbReference>
<dbReference type="InterPro" id="IPR013328">
    <property type="entry name" value="6PGD_dom2"/>
</dbReference>
<dbReference type="InterPro" id="IPR006115">
    <property type="entry name" value="6PGDH_NADP-bd"/>
</dbReference>
<dbReference type="InterPro" id="IPR011548">
    <property type="entry name" value="HIBADH"/>
</dbReference>
<dbReference type="InterPro" id="IPR029154">
    <property type="entry name" value="HIBADH-like_NADP-bd"/>
</dbReference>
<dbReference type="InterPro" id="IPR015815">
    <property type="entry name" value="HIBADH-related"/>
</dbReference>
<dbReference type="InterPro" id="IPR036291">
    <property type="entry name" value="NAD(P)-bd_dom_sf"/>
</dbReference>
<dbReference type="NCBIfam" id="TIGR01692">
    <property type="entry name" value="HIBADH"/>
    <property type="match status" value="1"/>
</dbReference>
<dbReference type="PANTHER" id="PTHR22981:SF7">
    <property type="entry name" value="3-HYDROXYISOBUTYRATE DEHYDROGENASE, MITOCHONDRIAL"/>
    <property type="match status" value="1"/>
</dbReference>
<dbReference type="PANTHER" id="PTHR22981">
    <property type="entry name" value="3-HYDROXYISOBUTYRATE DEHYDROGENASE-RELATED"/>
    <property type="match status" value="1"/>
</dbReference>
<dbReference type="Pfam" id="PF14833">
    <property type="entry name" value="NAD_binding_11"/>
    <property type="match status" value="1"/>
</dbReference>
<dbReference type="Pfam" id="PF03446">
    <property type="entry name" value="NAD_binding_2"/>
    <property type="match status" value="1"/>
</dbReference>
<dbReference type="PIRSF" id="PIRSF000103">
    <property type="entry name" value="HIBADH"/>
    <property type="match status" value="1"/>
</dbReference>
<dbReference type="SUPFAM" id="SSF48179">
    <property type="entry name" value="6-phosphogluconate dehydrogenase C-terminal domain-like"/>
    <property type="match status" value="1"/>
</dbReference>
<dbReference type="SUPFAM" id="SSF51735">
    <property type="entry name" value="NAD(P)-binding Rossmann-fold domains"/>
    <property type="match status" value="1"/>
</dbReference>
<dbReference type="PROSITE" id="PS00895">
    <property type="entry name" value="3_HYDROXYISOBUT_DH"/>
    <property type="match status" value="1"/>
</dbReference>
<protein>
    <recommendedName>
        <fullName>Probable 3-hydroxyisobutyrate dehydrogenase, mitochondrial</fullName>
        <shortName>HIBADH</shortName>
        <ecNumber>1.1.1.31</ecNumber>
    </recommendedName>
</protein>